<evidence type="ECO:0000250" key="1">
    <source>
        <dbReference type="UniProtKB" id="Q504Y0"/>
    </source>
</evidence>
<evidence type="ECO:0000255" key="2"/>
<evidence type="ECO:0000256" key="3">
    <source>
        <dbReference type="SAM" id="MobiDB-lite"/>
    </source>
</evidence>
<evidence type="ECO:0000269" key="4">
    <source>
    </source>
</evidence>
<evidence type="ECO:0000269" key="5">
    <source>
    </source>
</evidence>
<evidence type="ECO:0000303" key="6">
    <source>
    </source>
</evidence>
<evidence type="ECO:0000303" key="7">
    <source>
    </source>
</evidence>
<evidence type="ECO:0000305" key="8"/>
<evidence type="ECO:0000312" key="9">
    <source>
        <dbReference type="MGI" id="MGI:2139274"/>
    </source>
</evidence>
<organism>
    <name type="scientific">Mus musculus</name>
    <name type="common">Mouse</name>
    <dbReference type="NCBI Taxonomy" id="10090"/>
    <lineage>
        <taxon>Eukaryota</taxon>
        <taxon>Metazoa</taxon>
        <taxon>Chordata</taxon>
        <taxon>Craniata</taxon>
        <taxon>Vertebrata</taxon>
        <taxon>Euteleostomi</taxon>
        <taxon>Mammalia</taxon>
        <taxon>Eutheria</taxon>
        <taxon>Euarchontoglires</taxon>
        <taxon>Glires</taxon>
        <taxon>Rodentia</taxon>
        <taxon>Myomorpha</taxon>
        <taxon>Muroidea</taxon>
        <taxon>Muridae</taxon>
        <taxon>Murinae</taxon>
        <taxon>Mus</taxon>
        <taxon>Mus</taxon>
    </lineage>
</organism>
<sequence>MCFWTNLSVWMILLSHSLSLVSSTETGKTLTQNNSRAGSQGLLEVLRVLSAGDHWSLNHPQSLIKILLERTGCPQRTDWTQGDCKLCLEADALLLTAGGNLEDELREEVVQRVSLLLLYYIIHQEEICSSKLNMSNREYEFYLHSLLGLRQDEDSYFLSEKETDDILAFTRKYFGTSSSQCMETKILQRESGIQGSNGADEKTLPQLAATIIALSLQGVCLGRKALPSPDDFTEYIFSFLNSTNTLHLSEIEQLLNMLTTRRTCAKEDKYLHQYQRKQNTEEHSLRDPKTSTAMDKESDDHSPSWDQACFSARQLVEIFLQNHSSLSISKEDFKQLSPGIIQQLLSCSCQMPKDQQAKPPPTTLEKYGYSTVAVTLLTLGSMLGTALVLFHSCEENYSLILQLFVGLAVGTLSGDALLHLIPQVLGLHKQEAEFGHFHESQSPIWKLLGLLGGIHGFFLIEKCFILLVSPNTKGLPLVNEHVGHTHHLGLNPELNDQSSGGKSISTIQLKGPEDSQTTVLPIGNVPASNRNGKTISLLAIMILVGDSLHNFADGLVIGTAFSSSLESGVTTTIAILCHEIPHEMGDFAVLLSSGLSVRTAILMNFLSALTAFAGLYIGLSVSADPRVQDWILTVTAGMFLYLSLVGMLPEMTHVQTQRPWMTFLLQNVGLVLGWFSLLLLAVYEQNIKI</sequence>
<reference key="1">
    <citation type="journal article" date="2009" name="PLoS Biol.">
        <title>Lineage-specific biology revealed by a finished genome assembly of the mouse.</title>
        <authorList>
            <person name="Church D.M."/>
            <person name="Goodstadt L."/>
            <person name="Hillier L.W."/>
            <person name="Zody M.C."/>
            <person name="Goldstein S."/>
            <person name="She X."/>
            <person name="Bult C.J."/>
            <person name="Agarwala R."/>
            <person name="Cherry J.L."/>
            <person name="DiCuccio M."/>
            <person name="Hlavina W."/>
            <person name="Kapustin Y."/>
            <person name="Meric P."/>
            <person name="Maglott D."/>
            <person name="Birtle Z."/>
            <person name="Marques A.C."/>
            <person name="Graves T."/>
            <person name="Zhou S."/>
            <person name="Teague B."/>
            <person name="Potamousis K."/>
            <person name="Churas C."/>
            <person name="Place M."/>
            <person name="Herschleb J."/>
            <person name="Runnheim R."/>
            <person name="Forrest D."/>
            <person name="Amos-Landgraf J."/>
            <person name="Schwartz D.C."/>
            <person name="Cheng Z."/>
            <person name="Lindblad-Toh K."/>
            <person name="Eichler E.E."/>
            <person name="Ponting C.P."/>
        </authorList>
    </citation>
    <scope>NUCLEOTIDE SEQUENCE [LARGE SCALE GENOMIC DNA]</scope>
    <source>
        <strain>C57BL/6J</strain>
    </source>
</reference>
<reference key="2">
    <citation type="journal article" date="2004" name="Genome Res.">
        <title>The status, quality, and expansion of the NIH full-length cDNA project: the Mammalian Gene Collection (MGC).</title>
        <authorList>
            <consortium name="The MGC Project Team"/>
        </authorList>
    </citation>
    <scope>NUCLEOTIDE SEQUENCE [LARGE SCALE MRNA]</scope>
    <source>
        <strain>C57BL/6J</strain>
        <tissue>Brain</tissue>
    </source>
</reference>
<reference key="3">
    <citation type="journal article" date="2010" name="Cell">
        <title>A tissue-specific atlas of mouse protein phosphorylation and expression.</title>
        <authorList>
            <person name="Huttlin E.L."/>
            <person name="Jedrychowski M.P."/>
            <person name="Elias J.E."/>
            <person name="Goswami T."/>
            <person name="Rad R."/>
            <person name="Beausoleil S.A."/>
            <person name="Villen J."/>
            <person name="Haas W."/>
            <person name="Sowa M.E."/>
            <person name="Gygi S.P."/>
        </authorList>
    </citation>
    <scope>IDENTIFICATION BY MASS SPECTROMETRY [LARGE SCALE ANALYSIS]</scope>
    <source>
        <tissue>Brain</tissue>
    </source>
</reference>
<reference key="4">
    <citation type="journal article" date="2013" name="Proc. Natl. Acad. Sci. U.S.A.">
        <title>Neurulation and neurite extension require the zinc transporter ZIP12 (slc39a12).</title>
        <authorList>
            <person name="Chowanadisai W."/>
            <person name="Graham D.M."/>
            <person name="Keen C.L."/>
            <person name="Rucker R.B."/>
            <person name="Messerli M.A."/>
        </authorList>
    </citation>
    <scope>FUNCTION</scope>
    <scope>TRANSPORTER ACTIVITY</scope>
    <scope>BIOPHYSICOCHEMICAL PROPERTIES</scope>
    <scope>TISSUE SPECIFICITY</scope>
    <scope>SUBCELLULAR LOCATION</scope>
</reference>
<reference key="5">
    <citation type="journal article" date="2022" name="Reprod. Biol. Endocrinol.">
        <title>Zinc transporter ZIP12 maintains zinc homeostasis and protects spermatogonia from oxidative stress during spermatogenesis.</title>
        <authorList>
            <person name="Zhu X."/>
            <person name="Yu C."/>
            <person name="Wu W."/>
            <person name="Shi L."/>
            <person name="Jiang C."/>
            <person name="Wang L."/>
            <person name="Ding Z."/>
            <person name="Liu Y."/>
        </authorList>
    </citation>
    <scope>FUNCTION</scope>
    <scope>TRANSPORTER ACTIVITY</scope>
    <scope>TISSUE SPECIFICITY</scope>
</reference>
<gene>
    <name evidence="9" type="primary">Slc39a12</name>
    <name evidence="6" type="synonym">Zip12</name>
</gene>
<name>S39AC_MOUSE</name>
<feature type="chain" id="PRO_0000312499" description="Zinc transporter ZIP12">
    <location>
        <begin position="1"/>
        <end position="689"/>
    </location>
</feature>
<feature type="topological domain" description="Extracellular" evidence="2">
    <location>
        <begin position="1"/>
        <end position="201"/>
    </location>
</feature>
<feature type="transmembrane region" description="Helical" evidence="2">
    <location>
        <begin position="202"/>
        <end position="222"/>
    </location>
</feature>
<feature type="topological domain" description="Cytoplasmic" evidence="2">
    <location>
        <begin position="223"/>
        <end position="369"/>
    </location>
</feature>
<feature type="transmembrane region" description="Helical" evidence="2">
    <location>
        <begin position="370"/>
        <end position="390"/>
    </location>
</feature>
<feature type="topological domain" description="Extracellular" evidence="2">
    <location>
        <begin position="391"/>
        <end position="397"/>
    </location>
</feature>
<feature type="transmembrane region" description="Helical" evidence="2">
    <location>
        <begin position="398"/>
        <end position="418"/>
    </location>
</feature>
<feature type="topological domain" description="Cytoplasmic" evidence="2">
    <location>
        <begin position="419"/>
        <end position="447"/>
    </location>
</feature>
<feature type="transmembrane region" description="Helical" evidence="2">
    <location>
        <begin position="448"/>
        <end position="468"/>
    </location>
</feature>
<feature type="topological domain" description="Extracellular" evidence="2">
    <location>
        <begin position="469"/>
        <end position="536"/>
    </location>
</feature>
<feature type="transmembrane region" description="Helical" evidence="2">
    <location>
        <begin position="537"/>
        <end position="557"/>
    </location>
</feature>
<feature type="topological domain" description="Cytoplasmic" evidence="2">
    <location>
        <begin position="558"/>
        <end position="600"/>
    </location>
</feature>
<feature type="transmembrane region" description="Helical" evidence="2">
    <location>
        <begin position="601"/>
        <end position="621"/>
    </location>
</feature>
<feature type="topological domain" description="Extracellular" evidence="2">
    <location>
        <begin position="622"/>
        <end position="629"/>
    </location>
</feature>
<feature type="transmembrane region" description="Helical" evidence="2">
    <location>
        <begin position="630"/>
        <end position="650"/>
    </location>
</feature>
<feature type="topological domain" description="Cytoplasmic" evidence="2">
    <location>
        <begin position="651"/>
        <end position="662"/>
    </location>
</feature>
<feature type="transmembrane region" description="Helical" evidence="2">
    <location>
        <begin position="663"/>
        <end position="683"/>
    </location>
</feature>
<feature type="topological domain" description="Extracellular" evidence="2">
    <location>
        <begin position="684"/>
        <end position="689"/>
    </location>
</feature>
<feature type="region of interest" description="Disordered" evidence="3">
    <location>
        <begin position="275"/>
        <end position="303"/>
    </location>
</feature>
<feature type="short sequence motif" description="XEXPHE-motif" evidence="1">
    <location>
        <begin position="578"/>
        <end position="583"/>
    </location>
</feature>
<feature type="compositionally biased region" description="Basic and acidic residues" evidence="3">
    <location>
        <begin position="278"/>
        <end position="303"/>
    </location>
</feature>
<feature type="glycosylation site" description="N-linked (GlcNAc...) asparagine" evidence="2">
    <location>
        <position position="6"/>
    </location>
</feature>
<feature type="glycosylation site" description="N-linked (GlcNAc...) asparagine" evidence="2">
    <location>
        <position position="133"/>
    </location>
</feature>
<feature type="splice variant" id="VSP_029851" description="In isoform 2." evidence="8">
    <location>
        <begin position="474"/>
        <end position="509"/>
    </location>
</feature>
<protein>
    <recommendedName>
        <fullName evidence="6 7">Zinc transporter ZIP12</fullName>
    </recommendedName>
    <alternativeName>
        <fullName>Solute carrier family 39 member 12</fullName>
    </alternativeName>
    <alternativeName>
        <fullName>Zrt- and Irt-like protein 12</fullName>
        <shortName>ZIP-12</shortName>
    </alternativeName>
</protein>
<keyword id="KW-0025">Alternative splicing</keyword>
<keyword id="KW-0325">Glycoprotein</keyword>
<keyword id="KW-0472">Membrane</keyword>
<keyword id="KW-1185">Reference proteome</keyword>
<keyword id="KW-0812">Transmembrane</keyword>
<keyword id="KW-1133">Transmembrane helix</keyword>
<proteinExistence type="evidence at protein level"/>
<dbReference type="EMBL" id="AL844558">
    <property type="status" value="NOT_ANNOTATED_CDS"/>
    <property type="molecule type" value="Genomic_DNA"/>
</dbReference>
<dbReference type="EMBL" id="BC089362">
    <property type="protein sequence ID" value="AAH89362.1"/>
    <property type="molecule type" value="mRNA"/>
</dbReference>
<dbReference type="EMBL" id="BC113764">
    <property type="protein sequence ID" value="AAI13765.1"/>
    <property type="molecule type" value="mRNA"/>
</dbReference>
<dbReference type="EMBL" id="BC113765">
    <property type="protein sequence ID" value="AAI13766.1"/>
    <property type="molecule type" value="mRNA"/>
</dbReference>
<dbReference type="CCDS" id="CCDS15701.1">
    <molecule id="Q5FWH7-1"/>
</dbReference>
<dbReference type="RefSeq" id="NP_001012305.1">
    <molecule id="Q5FWH7-1"/>
    <property type="nucleotide sequence ID" value="NM_001012305.3"/>
</dbReference>
<dbReference type="RefSeq" id="NP_001396582.1">
    <molecule id="Q5FWH7-1"/>
    <property type="nucleotide sequence ID" value="NM_001409653.1"/>
</dbReference>
<dbReference type="RefSeq" id="NP_001396583.1">
    <molecule id="Q5FWH7-1"/>
    <property type="nucleotide sequence ID" value="NM_001409654.1"/>
</dbReference>
<dbReference type="SMR" id="Q5FWH7"/>
<dbReference type="FunCoup" id="Q5FWH7">
    <property type="interactions" value="123"/>
</dbReference>
<dbReference type="STRING" id="10090.ENSMUSP00000080911"/>
<dbReference type="GlyConnect" id="2831">
    <property type="glycosylation" value="1 N-Linked glycan (1 site)"/>
</dbReference>
<dbReference type="GlyCosmos" id="Q5FWH7">
    <property type="glycosylation" value="3 sites, 1 glycan"/>
</dbReference>
<dbReference type="GlyGen" id="Q5FWH7">
    <property type="glycosylation" value="5 sites, 3 N-linked glycans (2 sites), 1 O-linked glycan (1 site)"/>
</dbReference>
<dbReference type="iPTMnet" id="Q5FWH7"/>
<dbReference type="PhosphoSitePlus" id="Q5FWH7"/>
<dbReference type="SwissPalm" id="Q5FWH7"/>
<dbReference type="PaxDb" id="10090-ENSMUSP00000080911"/>
<dbReference type="PeptideAtlas" id="Q5FWH7"/>
<dbReference type="ProteomicsDB" id="256900">
    <molecule id="Q5FWH7-1"/>
</dbReference>
<dbReference type="ProteomicsDB" id="256901">
    <molecule id="Q5FWH7-2"/>
</dbReference>
<dbReference type="Antibodypedia" id="12047">
    <property type="antibodies" value="57 antibodies from 23 providers"/>
</dbReference>
<dbReference type="DNASU" id="277468"/>
<dbReference type="Ensembl" id="ENSMUST00000082290.8">
    <molecule id="Q5FWH7-1"/>
    <property type="protein sequence ID" value="ENSMUSP00000080911.7"/>
    <property type="gene ID" value="ENSMUSG00000036949.17"/>
</dbReference>
<dbReference type="Ensembl" id="ENSMUST00000114731.8">
    <molecule id="Q5FWH7-2"/>
    <property type="protein sequence ID" value="ENSMUSP00000110379.3"/>
    <property type="gene ID" value="ENSMUSG00000036949.17"/>
</dbReference>
<dbReference type="GeneID" id="277468"/>
<dbReference type="KEGG" id="mmu:277468"/>
<dbReference type="UCSC" id="uc008ikl.2">
    <molecule id="Q5FWH7-1"/>
    <property type="organism name" value="mouse"/>
</dbReference>
<dbReference type="AGR" id="MGI:2139274"/>
<dbReference type="CTD" id="221074"/>
<dbReference type="MGI" id="MGI:2139274">
    <property type="gene designation" value="Slc39a12"/>
</dbReference>
<dbReference type="VEuPathDB" id="HostDB:ENSMUSG00000036949"/>
<dbReference type="eggNOG" id="KOG2693">
    <property type="taxonomic scope" value="Eukaryota"/>
</dbReference>
<dbReference type="GeneTree" id="ENSGT00940000157914"/>
<dbReference type="HOGENOM" id="CLU_015114_12_1_1"/>
<dbReference type="InParanoid" id="Q5FWH7"/>
<dbReference type="OMA" id="DMCEKCL"/>
<dbReference type="OrthoDB" id="200954at2759"/>
<dbReference type="PhylomeDB" id="Q5FWH7"/>
<dbReference type="TreeFam" id="TF318470"/>
<dbReference type="BioGRID-ORCS" id="277468">
    <property type="hits" value="1 hit in 76 CRISPR screens"/>
</dbReference>
<dbReference type="ChiTaRS" id="Slc39a12">
    <property type="organism name" value="mouse"/>
</dbReference>
<dbReference type="PRO" id="PR:Q5FWH7"/>
<dbReference type="Proteomes" id="UP000000589">
    <property type="component" value="Chromosome 2"/>
</dbReference>
<dbReference type="RNAct" id="Q5FWH7">
    <property type="molecule type" value="protein"/>
</dbReference>
<dbReference type="Bgee" id="ENSMUSG00000036949">
    <property type="expression patterns" value="Expressed in choroid plexus epithelium and 90 other cell types or tissues"/>
</dbReference>
<dbReference type="ExpressionAtlas" id="Q5FWH7">
    <property type="expression patterns" value="baseline and differential"/>
</dbReference>
<dbReference type="GO" id="GO:0048471">
    <property type="term" value="C:perinuclear region of cytoplasm"/>
    <property type="evidence" value="ECO:0000314"/>
    <property type="project" value="MGI"/>
</dbReference>
<dbReference type="GO" id="GO:0005886">
    <property type="term" value="C:plasma membrane"/>
    <property type="evidence" value="ECO:0000314"/>
    <property type="project" value="MGI"/>
</dbReference>
<dbReference type="GO" id="GO:0005385">
    <property type="term" value="F:zinc ion transmembrane transporter activity"/>
    <property type="evidence" value="ECO:0000314"/>
    <property type="project" value="MGI"/>
</dbReference>
<dbReference type="GO" id="GO:0001841">
    <property type="term" value="P:neural tube formation"/>
    <property type="evidence" value="ECO:0000250"/>
    <property type="project" value="UniProtKB"/>
</dbReference>
<dbReference type="GO" id="GO:1990138">
    <property type="term" value="P:neuron projection extension"/>
    <property type="evidence" value="ECO:0000250"/>
    <property type="project" value="UniProtKB"/>
</dbReference>
<dbReference type="GO" id="GO:0031113">
    <property type="term" value="P:regulation of microtubule polymerization"/>
    <property type="evidence" value="ECO:0000315"/>
    <property type="project" value="MGI"/>
</dbReference>
<dbReference type="GO" id="GO:0010975">
    <property type="term" value="P:regulation of neuron projection development"/>
    <property type="evidence" value="ECO:0000315"/>
    <property type="project" value="MGI"/>
</dbReference>
<dbReference type="GO" id="GO:0007165">
    <property type="term" value="P:signal transduction"/>
    <property type="evidence" value="ECO:0000314"/>
    <property type="project" value="MGI"/>
</dbReference>
<dbReference type="GO" id="GO:0071578">
    <property type="term" value="P:zinc ion import across plasma membrane"/>
    <property type="evidence" value="ECO:0000314"/>
    <property type="project" value="MGI"/>
</dbReference>
<dbReference type="InterPro" id="IPR003689">
    <property type="entry name" value="ZIP"/>
</dbReference>
<dbReference type="InterPro" id="IPR049406">
    <property type="entry name" value="ZIP4_12_EF-hand"/>
</dbReference>
<dbReference type="InterPro" id="IPR041137">
    <property type="entry name" value="ZIP4_N"/>
</dbReference>
<dbReference type="InterPro" id="IPR050799">
    <property type="entry name" value="ZIP_Transporter"/>
</dbReference>
<dbReference type="PANTHER" id="PTHR12191">
    <property type="entry name" value="SOLUTE CARRIER FAMILY 39"/>
    <property type="match status" value="1"/>
</dbReference>
<dbReference type="PANTHER" id="PTHR12191:SF4">
    <property type="entry name" value="ZINC TRANSPORTER ZIP12"/>
    <property type="match status" value="1"/>
</dbReference>
<dbReference type="Pfam" id="PF21116">
    <property type="entry name" value="EF-hand_Zip"/>
    <property type="match status" value="1"/>
</dbReference>
<dbReference type="Pfam" id="PF02535">
    <property type="entry name" value="Zip"/>
    <property type="match status" value="1"/>
</dbReference>
<dbReference type="Pfam" id="PF18292">
    <property type="entry name" value="ZIP4_domain"/>
    <property type="match status" value="1"/>
</dbReference>
<accession>Q5FWH7</accession>
<accession>A2AQ76</accession>
<comment type="function">
    <text evidence="4 5">Uniporter that promotes Zn(2+) import from the extracellular space to the cytoplasm across the cell membrane (PubMed:23716681, PubMed:35065654). The transport activity is temperature dependent (PubMed:23716681). May play a role in neurulation and neurite extension (PubMed:23716681). May play a key role in maintaining intracellular zinc content at levels that reduce the inhibitory effects of rises in oxidative stress on spermatogonia and spermatozoa viability during spermatogenesis (PubMed:35065654).</text>
</comment>
<comment type="catalytic activity">
    <reaction evidence="4 5">
        <text>Zn(2+)(in) = Zn(2+)(out)</text>
        <dbReference type="Rhea" id="RHEA:29351"/>
        <dbReference type="ChEBI" id="CHEBI:29105"/>
    </reaction>
</comment>
<comment type="biophysicochemical properties">
    <kinetics>
        <KM evidence="4">6.6 nM for zinc (2+) ion</KM>
        <Vmax>2.7 pmol/min/mg protein</Vmax>
    </kinetics>
</comment>
<comment type="subcellular location">
    <subcellularLocation>
        <location evidence="4">Membrane</location>
        <topology evidence="2">Multi-pass membrane protein</topology>
    </subcellularLocation>
    <text evidence="4">At low Zn(2+) extracellular concentration, is redistributed from the perinuclear space to the cytoplasm and plasma membrane.</text>
</comment>
<comment type="alternative products">
    <event type="alternative splicing"/>
    <isoform>
        <id>Q5FWH7-1</id>
        <name>1</name>
        <sequence type="displayed"/>
    </isoform>
    <isoform>
        <id>Q5FWH7-2</id>
        <name>2</name>
        <sequence type="described" ref="VSP_029851"/>
    </isoform>
</comment>
<comment type="tissue specificity">
    <text evidence="4 5">Highly expressed in brain, namely in the hippocampus, frontal cortex, striatum, hypothalamus, and cerebellum (at protein level) (PubMed:23716681, PubMed:35065654). Also expressed in neurons in the Purkinje cell layer of the cerebellum, medulla oblongata, and the frontal cortex (PubMed:23716681). Abundantly expressed in the testis, namely in the spermatogonia and spermatids within the seminiferous tubules (PubMed:35065654).</text>
</comment>
<comment type="similarity">
    <text evidence="8">Belongs to the ZIP transporter (TC 2.A.5) family.</text>
</comment>